<name>NIST_LACLL</name>
<comment type="function">
    <text>Probably implicated in the export process of the lantibiotic nisin.</text>
</comment>
<comment type="subcellular location">
    <subcellularLocation>
        <location>Cell membrane</location>
        <topology>Multi-pass membrane protein</topology>
    </subcellularLocation>
</comment>
<comment type="similarity">
    <text evidence="3">Belongs to the ABC transporter superfamily. Nisin exporter (TC 3.A.1.111.3) family.</text>
</comment>
<dbReference type="EMBL" id="X68307">
    <property type="protein sequence ID" value="CAA48382.1"/>
    <property type="molecule type" value="Genomic_DNA"/>
</dbReference>
<dbReference type="EMBL" id="L16226">
    <property type="protein sequence ID" value="AAA25191.1"/>
    <property type="molecule type" value="Genomic_DNA"/>
</dbReference>
<dbReference type="EMBL" id="M65089">
    <property type="protein sequence ID" value="AAA73040.1"/>
    <property type="molecule type" value="Genomic_DNA"/>
</dbReference>
<dbReference type="PIR" id="E48951">
    <property type="entry name" value="E48951"/>
</dbReference>
<dbReference type="PIR" id="S36736">
    <property type="entry name" value="S36736"/>
</dbReference>
<dbReference type="RefSeq" id="WP_014570407.1">
    <property type="nucleotide sequence ID" value="NZ_ML956318.1"/>
</dbReference>
<dbReference type="SMR" id="Q03203"/>
<dbReference type="TCDB" id="3.A.1.111.3">
    <property type="family name" value="the atp-binding cassette (abc) superfamily"/>
</dbReference>
<dbReference type="GO" id="GO:0005886">
    <property type="term" value="C:plasma membrane"/>
    <property type="evidence" value="ECO:0007669"/>
    <property type="project" value="UniProtKB-SubCell"/>
</dbReference>
<dbReference type="GO" id="GO:0015421">
    <property type="term" value="F:ABC-type oligopeptide transporter activity"/>
    <property type="evidence" value="ECO:0007669"/>
    <property type="project" value="TreeGrafter"/>
</dbReference>
<dbReference type="GO" id="GO:0005524">
    <property type="term" value="F:ATP binding"/>
    <property type="evidence" value="ECO:0007669"/>
    <property type="project" value="UniProtKB-KW"/>
</dbReference>
<dbReference type="GO" id="GO:0016887">
    <property type="term" value="F:ATP hydrolysis activity"/>
    <property type="evidence" value="ECO:0007669"/>
    <property type="project" value="InterPro"/>
</dbReference>
<dbReference type="GO" id="GO:0043213">
    <property type="term" value="P:bacteriocin transport"/>
    <property type="evidence" value="ECO:0007669"/>
    <property type="project" value="UniProtKB-KW"/>
</dbReference>
<dbReference type="GO" id="GO:0015031">
    <property type="term" value="P:protein transport"/>
    <property type="evidence" value="ECO:0007669"/>
    <property type="project" value="UniProtKB-KW"/>
</dbReference>
<dbReference type="CDD" id="cd03228">
    <property type="entry name" value="ABCC_MRP_Like"/>
    <property type="match status" value="1"/>
</dbReference>
<dbReference type="Gene3D" id="1.20.1560.10">
    <property type="entry name" value="ABC transporter type 1, transmembrane domain"/>
    <property type="match status" value="1"/>
</dbReference>
<dbReference type="Gene3D" id="3.40.50.300">
    <property type="entry name" value="P-loop containing nucleotide triphosphate hydrolases"/>
    <property type="match status" value="1"/>
</dbReference>
<dbReference type="InterPro" id="IPR003593">
    <property type="entry name" value="AAA+_ATPase"/>
</dbReference>
<dbReference type="InterPro" id="IPR011527">
    <property type="entry name" value="ABC1_TM_dom"/>
</dbReference>
<dbReference type="InterPro" id="IPR036640">
    <property type="entry name" value="ABC1_TM_sf"/>
</dbReference>
<dbReference type="InterPro" id="IPR003439">
    <property type="entry name" value="ABC_transporter-like_ATP-bd"/>
</dbReference>
<dbReference type="InterPro" id="IPR017871">
    <property type="entry name" value="ABC_transporter-like_CS"/>
</dbReference>
<dbReference type="InterPro" id="IPR027417">
    <property type="entry name" value="P-loop_NTPase"/>
</dbReference>
<dbReference type="InterPro" id="IPR039421">
    <property type="entry name" value="Type_1_exporter"/>
</dbReference>
<dbReference type="PANTHER" id="PTHR43394:SF1">
    <property type="entry name" value="ATP-BINDING CASSETTE SUB-FAMILY B MEMBER 10, MITOCHONDRIAL"/>
    <property type="match status" value="1"/>
</dbReference>
<dbReference type="PANTHER" id="PTHR43394">
    <property type="entry name" value="ATP-DEPENDENT PERMEASE MDL1, MITOCHONDRIAL"/>
    <property type="match status" value="1"/>
</dbReference>
<dbReference type="Pfam" id="PF00005">
    <property type="entry name" value="ABC_tran"/>
    <property type="match status" value="1"/>
</dbReference>
<dbReference type="SMART" id="SM00382">
    <property type="entry name" value="AAA"/>
    <property type="match status" value="1"/>
</dbReference>
<dbReference type="SUPFAM" id="SSF90123">
    <property type="entry name" value="ABC transporter transmembrane region"/>
    <property type="match status" value="1"/>
</dbReference>
<dbReference type="SUPFAM" id="SSF52540">
    <property type="entry name" value="P-loop containing nucleoside triphosphate hydrolases"/>
    <property type="match status" value="1"/>
</dbReference>
<dbReference type="PROSITE" id="PS50929">
    <property type="entry name" value="ABC_TM1F"/>
    <property type="match status" value="1"/>
</dbReference>
<dbReference type="PROSITE" id="PS00211">
    <property type="entry name" value="ABC_TRANSPORTER_1"/>
    <property type="match status" value="1"/>
</dbReference>
<dbReference type="PROSITE" id="PS50893">
    <property type="entry name" value="ABC_TRANSPORTER_2"/>
    <property type="match status" value="1"/>
</dbReference>
<gene>
    <name type="primary">nisT</name>
</gene>
<feature type="chain" id="PRO_0000092632" description="Nisin transport ATP-binding protein NisT">
    <location>
        <begin position="1"/>
        <end position="600"/>
    </location>
</feature>
<feature type="transmembrane region" description="Helical" evidence="2">
    <location>
        <begin position="34"/>
        <end position="54"/>
    </location>
</feature>
<feature type="transmembrane region" description="Helical" evidence="2">
    <location>
        <begin position="69"/>
        <end position="89"/>
    </location>
</feature>
<feature type="transmembrane region" description="Helical" evidence="2">
    <location>
        <begin position="147"/>
        <end position="167"/>
    </location>
</feature>
<feature type="transmembrane region" description="Helical" evidence="2">
    <location>
        <begin position="168"/>
        <end position="188"/>
    </location>
</feature>
<feature type="transmembrane region" description="Helical" evidence="2">
    <location>
        <begin position="260"/>
        <end position="280"/>
    </location>
</feature>
<feature type="domain" description="ABC transmembrane type-1" evidence="2">
    <location>
        <begin position="34"/>
        <end position="317"/>
    </location>
</feature>
<feature type="domain" description="ABC transporter" evidence="1">
    <location>
        <begin position="352"/>
        <end position="592"/>
    </location>
</feature>
<feature type="binding site" evidence="1">
    <location>
        <begin position="386"/>
        <end position="393"/>
    </location>
    <ligand>
        <name>ATP</name>
        <dbReference type="ChEBI" id="CHEBI:30616"/>
    </ligand>
</feature>
<feature type="sequence conflict" description="In Ref. 2; AAA25191." evidence="3" ref="2">
    <original>Y</original>
    <variation>N</variation>
    <location>
        <position position="14"/>
    </location>
</feature>
<feature type="sequence conflict" description="In Ref. 2; AAA25191." evidence="3" ref="2">
    <original>E</original>
    <variation>V</variation>
    <location>
        <position position="151"/>
    </location>
</feature>
<sequence length="600" mass="69210">MDEVKEFTSKQFFYTLLTLPSTLKLIFQLEKRYAIYLIVLNAITAFVPLASLFIYQDLINSVLGSGRHLINIIIIYFIVQVITTVLGQLESYVSGKFDMRLSYSINMRLMRTTSSLELSDYEQADMYNIIEKVTQDSTYKPFQLFNAIIVELSSFISLLSSLFFIGTWNIGVAILLLIVPVLSLVLFLRVGQLEFLIQWQRASSERETWYIVYLLTHDFSFKEIKLNNISNYFIHKFGKLKKGFINQDLAIARKKTYFNIFLDFILNLINILTIFAMILSVRAGKLLIGNLVSLIQAISKINTYSQTMIQNIYIIYNTSLFMEQLFEFLKRESVVHKKIEDTEICNQHIGTVKVINLSYVYPNSNAFALKNINLSFEKGELTAIVGKNGSGKSTLVKIISGLYQPTMGIIQYDKMRSSLMPEEFYQKNISVLFQDFVKYELTIRENIGLSDLSSQWEDEKIIKVLDNLGLDFLKTNNQYVLDTQLGNWFQEGHQLSGGQWQKIALARTFFKKASIYILDEPSAALDPVAEKEIFDYFVALSENNISIFISHSLNAARKANKIVVMKDGQVEDVGSHDVLLRRCQYYQELYYSEQYEDNDE</sequence>
<evidence type="ECO:0000255" key="1">
    <source>
        <dbReference type="PROSITE-ProRule" id="PRU00434"/>
    </source>
</evidence>
<evidence type="ECO:0000255" key="2">
    <source>
        <dbReference type="PROSITE-ProRule" id="PRU00441"/>
    </source>
</evidence>
<evidence type="ECO:0000305" key="3"/>
<keyword id="KW-0067">ATP-binding</keyword>
<keyword id="KW-0080">Bacteriocin transport</keyword>
<keyword id="KW-1003">Cell membrane</keyword>
<keyword id="KW-0472">Membrane</keyword>
<keyword id="KW-0547">Nucleotide-binding</keyword>
<keyword id="KW-0653">Protein transport</keyword>
<keyword id="KW-0812">Transmembrane</keyword>
<keyword id="KW-1133">Transmembrane helix</keyword>
<keyword id="KW-0813">Transport</keyword>
<accession>Q03203</accession>
<protein>
    <recommendedName>
        <fullName>Nisin transport ATP-binding protein NisT</fullName>
    </recommendedName>
</protein>
<proteinExistence type="inferred from homology"/>
<reference key="1">
    <citation type="journal article" date="1992" name="Appl. Environ. Microbiol.">
        <title>Biosynthesis of the lantibiotic nisin: genomic organization and membrane localization of the NisB protein.</title>
        <authorList>
            <person name="Engelke G."/>
            <person name="Gutowski-Eckel Z."/>
            <person name="Hammelmann M."/>
            <person name="Entian K.-D."/>
        </authorList>
    </citation>
    <scope>NUCLEOTIDE SEQUENCE [GENOMIC DNA]</scope>
    <source>
        <strain>6F3</strain>
    </source>
</reference>
<reference key="2">
    <citation type="journal article" date="1993" name="Eur. J. Biochem.">
        <title>Characterization of the nisin gene cluster nisABTCIPR of Lactococcus lactis. Requirement of expression of the nisA and nisI genes for development of immunity.</title>
        <authorList>
            <person name="Kuipers O.P."/>
            <person name="Beerthuyzen M.M."/>
            <person name="Siezen R.J."/>
            <person name="de Vos W.M."/>
        </authorList>
    </citation>
    <scope>NUCLEOTIDE SEQUENCE [GENOMIC DNA]</scope>
    <source>
        <strain>NIZO R5</strain>
    </source>
</reference>
<reference key="3">
    <citation type="journal article" date="1991" name="Appl. Environ. Microbiol.">
        <title>Characterization of the nisin gene as part of a polycistronic operon in the chromosome of Lactococcus lactis ATCC 11454.</title>
        <authorList>
            <person name="Steen M.T."/>
            <person name="Chung Y.J."/>
            <person name="Hansen J.N."/>
        </authorList>
    </citation>
    <scope>NUCLEOTIDE SEQUENCE [GENOMIC DNA] OF 1-7</scope>
    <source>
        <strain>ATCC 11454 / DSM 20729 / LMG 7930 / NCDO 496 / NCIMB 8586 / Berridge X 13</strain>
    </source>
</reference>
<organism>
    <name type="scientific">Lactococcus lactis subsp. lactis</name>
    <name type="common">Streptococcus lactis</name>
    <dbReference type="NCBI Taxonomy" id="1360"/>
    <lineage>
        <taxon>Bacteria</taxon>
        <taxon>Bacillati</taxon>
        <taxon>Bacillota</taxon>
        <taxon>Bacilli</taxon>
        <taxon>Lactobacillales</taxon>
        <taxon>Streptococcaceae</taxon>
        <taxon>Lactococcus</taxon>
    </lineage>
</organism>